<name>LEPA_VIBVU</name>
<accession>Q8DC78</accession>
<organism>
    <name type="scientific">Vibrio vulnificus (strain CMCP6)</name>
    <dbReference type="NCBI Taxonomy" id="216895"/>
    <lineage>
        <taxon>Bacteria</taxon>
        <taxon>Pseudomonadati</taxon>
        <taxon>Pseudomonadota</taxon>
        <taxon>Gammaproteobacteria</taxon>
        <taxon>Vibrionales</taxon>
        <taxon>Vibrionaceae</taxon>
        <taxon>Vibrio</taxon>
    </lineage>
</organism>
<reference key="1">
    <citation type="submission" date="2002-12" db="EMBL/GenBank/DDBJ databases">
        <title>Complete genome sequence of Vibrio vulnificus CMCP6.</title>
        <authorList>
            <person name="Rhee J.H."/>
            <person name="Kim S.Y."/>
            <person name="Chung S.S."/>
            <person name="Kim J.J."/>
            <person name="Moon Y.H."/>
            <person name="Jeong H."/>
            <person name="Choy H.E."/>
        </authorList>
    </citation>
    <scope>NUCLEOTIDE SEQUENCE [LARGE SCALE GENOMIC DNA]</scope>
    <source>
        <strain>CMCP6</strain>
    </source>
</reference>
<protein>
    <recommendedName>
        <fullName evidence="1">Elongation factor 4</fullName>
        <shortName evidence="1">EF-4</shortName>
        <ecNumber evidence="1">3.6.5.n1</ecNumber>
    </recommendedName>
    <alternativeName>
        <fullName evidence="1">Ribosomal back-translocase LepA</fullName>
    </alternativeName>
</protein>
<dbReference type="EC" id="3.6.5.n1" evidence="1"/>
<dbReference type="EMBL" id="AE016795">
    <property type="protein sequence ID" value="AAO09987.1"/>
    <property type="molecule type" value="Genomic_DNA"/>
</dbReference>
<dbReference type="RefSeq" id="WP_011079498.1">
    <property type="nucleotide sequence ID" value="NC_004459.3"/>
</dbReference>
<dbReference type="SMR" id="Q8DC78"/>
<dbReference type="KEGG" id="vvu:VV1_1563"/>
<dbReference type="HOGENOM" id="CLU_009995_3_3_6"/>
<dbReference type="Proteomes" id="UP000002275">
    <property type="component" value="Chromosome 1"/>
</dbReference>
<dbReference type="GO" id="GO:0005886">
    <property type="term" value="C:plasma membrane"/>
    <property type="evidence" value="ECO:0007669"/>
    <property type="project" value="UniProtKB-SubCell"/>
</dbReference>
<dbReference type="GO" id="GO:0005525">
    <property type="term" value="F:GTP binding"/>
    <property type="evidence" value="ECO:0007669"/>
    <property type="project" value="UniProtKB-UniRule"/>
</dbReference>
<dbReference type="GO" id="GO:0003924">
    <property type="term" value="F:GTPase activity"/>
    <property type="evidence" value="ECO:0007669"/>
    <property type="project" value="UniProtKB-UniRule"/>
</dbReference>
<dbReference type="GO" id="GO:0097216">
    <property type="term" value="F:guanosine tetraphosphate binding"/>
    <property type="evidence" value="ECO:0007669"/>
    <property type="project" value="UniProtKB-ARBA"/>
</dbReference>
<dbReference type="GO" id="GO:0043022">
    <property type="term" value="F:ribosome binding"/>
    <property type="evidence" value="ECO:0007669"/>
    <property type="project" value="UniProtKB-UniRule"/>
</dbReference>
<dbReference type="GO" id="GO:0003746">
    <property type="term" value="F:translation elongation factor activity"/>
    <property type="evidence" value="ECO:0007669"/>
    <property type="project" value="UniProtKB-UniRule"/>
</dbReference>
<dbReference type="GO" id="GO:0045727">
    <property type="term" value="P:positive regulation of translation"/>
    <property type="evidence" value="ECO:0007669"/>
    <property type="project" value="UniProtKB-UniRule"/>
</dbReference>
<dbReference type="CDD" id="cd03699">
    <property type="entry name" value="EF4_II"/>
    <property type="match status" value="1"/>
</dbReference>
<dbReference type="CDD" id="cd16260">
    <property type="entry name" value="EF4_III"/>
    <property type="match status" value="1"/>
</dbReference>
<dbReference type="CDD" id="cd01890">
    <property type="entry name" value="LepA"/>
    <property type="match status" value="1"/>
</dbReference>
<dbReference type="CDD" id="cd03709">
    <property type="entry name" value="lepA_C"/>
    <property type="match status" value="1"/>
</dbReference>
<dbReference type="FunFam" id="3.40.50.300:FF:000078">
    <property type="entry name" value="Elongation factor 4"/>
    <property type="match status" value="1"/>
</dbReference>
<dbReference type="FunFam" id="2.40.30.10:FF:000015">
    <property type="entry name" value="Translation factor GUF1, mitochondrial"/>
    <property type="match status" value="1"/>
</dbReference>
<dbReference type="FunFam" id="3.30.70.240:FF:000007">
    <property type="entry name" value="Translation factor GUF1, mitochondrial"/>
    <property type="match status" value="1"/>
</dbReference>
<dbReference type="FunFam" id="3.30.70.2570:FF:000001">
    <property type="entry name" value="Translation factor GUF1, mitochondrial"/>
    <property type="match status" value="1"/>
</dbReference>
<dbReference type="FunFam" id="3.30.70.870:FF:000004">
    <property type="entry name" value="Translation factor GUF1, mitochondrial"/>
    <property type="match status" value="1"/>
</dbReference>
<dbReference type="Gene3D" id="3.30.70.240">
    <property type="match status" value="1"/>
</dbReference>
<dbReference type="Gene3D" id="3.30.70.2570">
    <property type="entry name" value="Elongation factor 4, C-terminal domain"/>
    <property type="match status" value="1"/>
</dbReference>
<dbReference type="Gene3D" id="3.30.70.870">
    <property type="entry name" value="Elongation Factor G (Translational Gtpase), domain 3"/>
    <property type="match status" value="1"/>
</dbReference>
<dbReference type="Gene3D" id="3.40.50.300">
    <property type="entry name" value="P-loop containing nucleotide triphosphate hydrolases"/>
    <property type="match status" value="1"/>
</dbReference>
<dbReference type="Gene3D" id="2.40.30.10">
    <property type="entry name" value="Translation factors"/>
    <property type="match status" value="1"/>
</dbReference>
<dbReference type="HAMAP" id="MF_00071">
    <property type="entry name" value="LepA"/>
    <property type="match status" value="1"/>
</dbReference>
<dbReference type="InterPro" id="IPR006297">
    <property type="entry name" value="EF-4"/>
</dbReference>
<dbReference type="InterPro" id="IPR035647">
    <property type="entry name" value="EFG_III/V"/>
</dbReference>
<dbReference type="InterPro" id="IPR000640">
    <property type="entry name" value="EFG_V-like"/>
</dbReference>
<dbReference type="InterPro" id="IPR004161">
    <property type="entry name" value="EFTu-like_2"/>
</dbReference>
<dbReference type="InterPro" id="IPR031157">
    <property type="entry name" value="G_TR_CS"/>
</dbReference>
<dbReference type="InterPro" id="IPR038363">
    <property type="entry name" value="LepA_C_sf"/>
</dbReference>
<dbReference type="InterPro" id="IPR013842">
    <property type="entry name" value="LepA_CTD"/>
</dbReference>
<dbReference type="InterPro" id="IPR035654">
    <property type="entry name" value="LepA_IV"/>
</dbReference>
<dbReference type="InterPro" id="IPR027417">
    <property type="entry name" value="P-loop_NTPase"/>
</dbReference>
<dbReference type="InterPro" id="IPR005225">
    <property type="entry name" value="Small_GTP-bd"/>
</dbReference>
<dbReference type="InterPro" id="IPR000795">
    <property type="entry name" value="T_Tr_GTP-bd_dom"/>
</dbReference>
<dbReference type="InterPro" id="IPR009000">
    <property type="entry name" value="Transl_B-barrel_sf"/>
</dbReference>
<dbReference type="NCBIfam" id="TIGR01393">
    <property type="entry name" value="lepA"/>
    <property type="match status" value="1"/>
</dbReference>
<dbReference type="NCBIfam" id="TIGR00231">
    <property type="entry name" value="small_GTP"/>
    <property type="match status" value="1"/>
</dbReference>
<dbReference type="PANTHER" id="PTHR43512:SF4">
    <property type="entry name" value="TRANSLATION FACTOR GUF1 HOMOLOG, CHLOROPLASTIC"/>
    <property type="match status" value="1"/>
</dbReference>
<dbReference type="PANTHER" id="PTHR43512">
    <property type="entry name" value="TRANSLATION FACTOR GUF1-RELATED"/>
    <property type="match status" value="1"/>
</dbReference>
<dbReference type="Pfam" id="PF00679">
    <property type="entry name" value="EFG_C"/>
    <property type="match status" value="1"/>
</dbReference>
<dbReference type="Pfam" id="PF00009">
    <property type="entry name" value="GTP_EFTU"/>
    <property type="match status" value="1"/>
</dbReference>
<dbReference type="Pfam" id="PF03144">
    <property type="entry name" value="GTP_EFTU_D2"/>
    <property type="match status" value="1"/>
</dbReference>
<dbReference type="Pfam" id="PF06421">
    <property type="entry name" value="LepA_C"/>
    <property type="match status" value="1"/>
</dbReference>
<dbReference type="PRINTS" id="PR00315">
    <property type="entry name" value="ELONGATNFCT"/>
</dbReference>
<dbReference type="SMART" id="SM00838">
    <property type="entry name" value="EFG_C"/>
    <property type="match status" value="1"/>
</dbReference>
<dbReference type="SUPFAM" id="SSF54980">
    <property type="entry name" value="EF-G C-terminal domain-like"/>
    <property type="match status" value="2"/>
</dbReference>
<dbReference type="SUPFAM" id="SSF52540">
    <property type="entry name" value="P-loop containing nucleoside triphosphate hydrolases"/>
    <property type="match status" value="1"/>
</dbReference>
<dbReference type="SUPFAM" id="SSF50447">
    <property type="entry name" value="Translation proteins"/>
    <property type="match status" value="1"/>
</dbReference>
<dbReference type="PROSITE" id="PS00301">
    <property type="entry name" value="G_TR_1"/>
    <property type="match status" value="1"/>
</dbReference>
<dbReference type="PROSITE" id="PS51722">
    <property type="entry name" value="G_TR_2"/>
    <property type="match status" value="1"/>
</dbReference>
<gene>
    <name evidence="1" type="primary">lepA</name>
    <name type="ordered locus">VV1_1563</name>
</gene>
<feature type="chain" id="PRO_0000176372" description="Elongation factor 4">
    <location>
        <begin position="1"/>
        <end position="597"/>
    </location>
</feature>
<feature type="domain" description="tr-type G">
    <location>
        <begin position="2"/>
        <end position="184"/>
    </location>
</feature>
<feature type="binding site" evidence="1">
    <location>
        <begin position="14"/>
        <end position="19"/>
    </location>
    <ligand>
        <name>GTP</name>
        <dbReference type="ChEBI" id="CHEBI:37565"/>
    </ligand>
</feature>
<feature type="binding site" evidence="1">
    <location>
        <begin position="131"/>
        <end position="134"/>
    </location>
    <ligand>
        <name>GTP</name>
        <dbReference type="ChEBI" id="CHEBI:37565"/>
    </ligand>
</feature>
<comment type="function">
    <text evidence="1">Required for accurate and efficient protein synthesis under certain stress conditions. May act as a fidelity factor of the translation reaction, by catalyzing a one-codon backward translocation of tRNAs on improperly translocated ribosomes. Back-translocation proceeds from a post-translocation (POST) complex to a pre-translocation (PRE) complex, thus giving elongation factor G a second chance to translocate the tRNAs correctly. Binds to ribosomes in a GTP-dependent manner.</text>
</comment>
<comment type="catalytic activity">
    <reaction evidence="1">
        <text>GTP + H2O = GDP + phosphate + H(+)</text>
        <dbReference type="Rhea" id="RHEA:19669"/>
        <dbReference type="ChEBI" id="CHEBI:15377"/>
        <dbReference type="ChEBI" id="CHEBI:15378"/>
        <dbReference type="ChEBI" id="CHEBI:37565"/>
        <dbReference type="ChEBI" id="CHEBI:43474"/>
        <dbReference type="ChEBI" id="CHEBI:58189"/>
        <dbReference type="EC" id="3.6.5.n1"/>
    </reaction>
</comment>
<comment type="subcellular location">
    <subcellularLocation>
        <location evidence="1">Cell inner membrane</location>
        <topology evidence="1">Peripheral membrane protein</topology>
        <orientation evidence="1">Cytoplasmic side</orientation>
    </subcellularLocation>
</comment>
<comment type="similarity">
    <text evidence="1">Belongs to the TRAFAC class translation factor GTPase superfamily. Classic translation factor GTPase family. LepA subfamily.</text>
</comment>
<evidence type="ECO:0000255" key="1">
    <source>
        <dbReference type="HAMAP-Rule" id="MF_00071"/>
    </source>
</evidence>
<proteinExistence type="inferred from homology"/>
<keyword id="KW-0997">Cell inner membrane</keyword>
<keyword id="KW-1003">Cell membrane</keyword>
<keyword id="KW-0342">GTP-binding</keyword>
<keyword id="KW-0378">Hydrolase</keyword>
<keyword id="KW-0472">Membrane</keyword>
<keyword id="KW-0547">Nucleotide-binding</keyword>
<keyword id="KW-0648">Protein biosynthesis</keyword>
<sequence>MKHIRNFSIIAHIDHGKSTLSDRLIQVCGGLSDREMAEQVLDSMELERERGITIKAQSVTLDYKAQDGETYQLNFIDTPGHVDFSYEVSRSLAACEGALLVVDAGQGVEAQTLANCYTAIEMDLEVVPILNKIDLPAAEPERVAEEIEDIVGIDAIDAVRCSAKTGLGVDDVLEKIVSAIPAPEGDPEAPLQALIIDSWFDNYLGVVSLVRIKHGKLKKNDKIKVMSTGQVWGVDRLGIFTPKQIDTTELNTGEVGWVVCGIKDILGAPVGDTLTLAKNGAEKALPGFKKVKPQVYAGLFPVSSDDYEAFRDALGKLSLNDASLFYEPENSAALGFGFRCGFLGMLHMEIIQERLEREYDLDLITTAPTVVYEVLTTSKQTIYVDSPAKLPAVNDVAEIREPIARCNILVPADYLGNVITLCIEKRGTQVDMVYHGNQVALTYDIPMAEVVLDFFDRLKSTSRGYASLDYGFQRFEESNMVRVDVLLNGDKVDALAIITHKDQSQTRGRQLVEKMKEFIPRQMFDIAIQAAIGNHIIARSTVKQLRKNVLAKCYGGDVSRKKKLLKKQKEGKKRMKQIGNVELPQEAFLAILHVGKD</sequence>